<name>MECI_STAAM</name>
<comment type="function">
    <text evidence="1">Transcriptional repressor that constitutively blocks the transcription of the gene for the penicillin-binding protein MecA. Binds DNA as a dimer (By similarity).</text>
</comment>
<comment type="subunit">
    <text evidence="1">Monomer and homodimer.</text>
</comment>
<comment type="subcellular location">
    <subcellularLocation>
        <location evidence="2">Cytoplasm</location>
    </subcellularLocation>
</comment>
<comment type="PTM">
    <text evidence="1">Upon exposure to beta-lactams, proteolytic cleavage at a single site impairs dimerization and abolishes repressor activity.</text>
</comment>
<comment type="similarity">
    <text evidence="2">Belongs to the BlaI transcriptional regulatory family.</text>
</comment>
<dbReference type="EMBL" id="BA000017">
    <property type="protein sequence ID" value="BAB56205.1"/>
    <property type="molecule type" value="Genomic_DNA"/>
</dbReference>
<dbReference type="RefSeq" id="WP_000369211.1">
    <property type="nucleotide sequence ID" value="NC_002758.2"/>
</dbReference>
<dbReference type="SMR" id="Q932L5"/>
<dbReference type="KEGG" id="sav:SAV0043"/>
<dbReference type="HOGENOM" id="CLU_119090_2_1_9"/>
<dbReference type="PhylomeDB" id="Q932L5"/>
<dbReference type="Proteomes" id="UP000002481">
    <property type="component" value="Chromosome"/>
</dbReference>
<dbReference type="GO" id="GO:0005737">
    <property type="term" value="C:cytoplasm"/>
    <property type="evidence" value="ECO:0007669"/>
    <property type="project" value="UniProtKB-SubCell"/>
</dbReference>
<dbReference type="GO" id="GO:0003677">
    <property type="term" value="F:DNA binding"/>
    <property type="evidence" value="ECO:0007669"/>
    <property type="project" value="UniProtKB-KW"/>
</dbReference>
<dbReference type="GO" id="GO:0045892">
    <property type="term" value="P:negative regulation of DNA-templated transcription"/>
    <property type="evidence" value="ECO:0007669"/>
    <property type="project" value="InterPro"/>
</dbReference>
<dbReference type="GO" id="GO:0046677">
    <property type="term" value="P:response to antibiotic"/>
    <property type="evidence" value="ECO:0007669"/>
    <property type="project" value="UniProtKB-KW"/>
</dbReference>
<dbReference type="Gene3D" id="1.10.4040.10">
    <property type="entry name" value="Penicillinase repressor domain"/>
    <property type="match status" value="1"/>
</dbReference>
<dbReference type="Gene3D" id="1.10.10.10">
    <property type="entry name" value="Winged helix-like DNA-binding domain superfamily/Winged helix DNA-binding domain"/>
    <property type="match status" value="1"/>
</dbReference>
<dbReference type="InterPro" id="IPR005650">
    <property type="entry name" value="BlaI_family"/>
</dbReference>
<dbReference type="InterPro" id="IPR036388">
    <property type="entry name" value="WH-like_DNA-bd_sf"/>
</dbReference>
<dbReference type="InterPro" id="IPR036390">
    <property type="entry name" value="WH_DNA-bd_sf"/>
</dbReference>
<dbReference type="NCBIfam" id="NF000243">
    <property type="entry name" value="MecI_of_mecA"/>
    <property type="match status" value="1"/>
</dbReference>
<dbReference type="Pfam" id="PF03965">
    <property type="entry name" value="Penicillinase_R"/>
    <property type="match status" value="1"/>
</dbReference>
<dbReference type="PIRSF" id="PIRSF019455">
    <property type="entry name" value="CopR_AtkY"/>
    <property type="match status" value="1"/>
</dbReference>
<dbReference type="SUPFAM" id="SSF46785">
    <property type="entry name" value="Winged helix' DNA-binding domain"/>
    <property type="match status" value="1"/>
</dbReference>
<protein>
    <recommendedName>
        <fullName>Methicillin resistance regulatory protein MecI</fullName>
    </recommendedName>
</protein>
<keyword id="KW-0046">Antibiotic resistance</keyword>
<keyword id="KW-0963">Cytoplasm</keyword>
<keyword id="KW-0238">DNA-binding</keyword>
<keyword id="KW-0678">Repressor</keyword>
<keyword id="KW-0804">Transcription</keyword>
<keyword id="KW-0805">Transcription regulation</keyword>
<organism>
    <name type="scientific">Staphylococcus aureus (strain Mu50 / ATCC 700699)</name>
    <dbReference type="NCBI Taxonomy" id="158878"/>
    <lineage>
        <taxon>Bacteria</taxon>
        <taxon>Bacillati</taxon>
        <taxon>Bacillota</taxon>
        <taxon>Bacilli</taxon>
        <taxon>Bacillales</taxon>
        <taxon>Staphylococcaceae</taxon>
        <taxon>Staphylococcus</taxon>
    </lineage>
</organism>
<evidence type="ECO:0000250" key="1"/>
<evidence type="ECO:0000305" key="2"/>
<feature type="chain" id="PRO_0000062796" description="Methicillin resistance regulatory protein MecI">
    <location>
        <begin position="1"/>
        <end position="123"/>
    </location>
</feature>
<feature type="DNA-binding region" description="H-T-H motif" evidence="1">
    <location>
        <begin position="7"/>
        <end position="71"/>
    </location>
</feature>
<feature type="region of interest" description="Important for dimerization" evidence="1">
    <location>
        <begin position="74"/>
        <end position="123"/>
    </location>
</feature>
<feature type="site" description="Cleavage" evidence="1">
    <location>
        <begin position="101"/>
        <end position="102"/>
    </location>
</feature>
<proteinExistence type="inferred from homology"/>
<gene>
    <name type="primary">mecI</name>
    <name type="ordered locus">SAV0043</name>
</gene>
<sequence length="123" mass="14838">MDNKTYEISSAEWEFMNIIWMKKYASANNIIEEIQMQKDWSPKTIRTLITRLYKKGFIDRKKDNKIFQYYSLVEESDIKYKTSKNFINKVYKGGFNSLVLNFVEKEDLSQDEIEELRNILNKK</sequence>
<accession>Q932L5</accession>
<reference key="1">
    <citation type="journal article" date="2001" name="Lancet">
        <title>Whole genome sequencing of meticillin-resistant Staphylococcus aureus.</title>
        <authorList>
            <person name="Kuroda M."/>
            <person name="Ohta T."/>
            <person name="Uchiyama I."/>
            <person name="Baba T."/>
            <person name="Yuzawa H."/>
            <person name="Kobayashi I."/>
            <person name="Cui L."/>
            <person name="Oguchi A."/>
            <person name="Aoki K."/>
            <person name="Nagai Y."/>
            <person name="Lian J.-Q."/>
            <person name="Ito T."/>
            <person name="Kanamori M."/>
            <person name="Matsumaru H."/>
            <person name="Maruyama A."/>
            <person name="Murakami H."/>
            <person name="Hosoyama A."/>
            <person name="Mizutani-Ui Y."/>
            <person name="Takahashi N.K."/>
            <person name="Sawano T."/>
            <person name="Inoue R."/>
            <person name="Kaito C."/>
            <person name="Sekimizu K."/>
            <person name="Hirakawa H."/>
            <person name="Kuhara S."/>
            <person name="Goto S."/>
            <person name="Yabuzaki J."/>
            <person name="Kanehisa M."/>
            <person name="Yamashita A."/>
            <person name="Oshima K."/>
            <person name="Furuya K."/>
            <person name="Yoshino C."/>
            <person name="Shiba T."/>
            <person name="Hattori M."/>
            <person name="Ogasawara N."/>
            <person name="Hayashi H."/>
            <person name="Hiramatsu K."/>
        </authorList>
    </citation>
    <scope>NUCLEOTIDE SEQUENCE [LARGE SCALE GENOMIC DNA]</scope>
    <source>
        <strain>Mu50 / ATCC 700699</strain>
    </source>
</reference>